<organism>
    <name type="scientific">Aeromonas salmonicida (strain A449)</name>
    <dbReference type="NCBI Taxonomy" id="382245"/>
    <lineage>
        <taxon>Bacteria</taxon>
        <taxon>Pseudomonadati</taxon>
        <taxon>Pseudomonadota</taxon>
        <taxon>Gammaproteobacteria</taxon>
        <taxon>Aeromonadales</taxon>
        <taxon>Aeromonadaceae</taxon>
        <taxon>Aeromonas</taxon>
    </lineage>
</organism>
<proteinExistence type="inferred from homology"/>
<dbReference type="EC" id="3.6.4.-" evidence="1"/>
<dbReference type="EMBL" id="CP000644">
    <property type="protein sequence ID" value="ABO91397.1"/>
    <property type="molecule type" value="Genomic_DNA"/>
</dbReference>
<dbReference type="RefSeq" id="WP_005318987.1">
    <property type="nucleotide sequence ID" value="NC_009348.1"/>
</dbReference>
<dbReference type="SMR" id="A4SR75"/>
<dbReference type="STRING" id="29491.GCA_000820065_04373"/>
<dbReference type="KEGG" id="asa:ASA_3426"/>
<dbReference type="eggNOG" id="COG0553">
    <property type="taxonomic scope" value="Bacteria"/>
</dbReference>
<dbReference type="HOGENOM" id="CLU_011520_0_0_6"/>
<dbReference type="Proteomes" id="UP000000225">
    <property type="component" value="Chromosome"/>
</dbReference>
<dbReference type="GO" id="GO:0005524">
    <property type="term" value="F:ATP binding"/>
    <property type="evidence" value="ECO:0007669"/>
    <property type="project" value="UniProtKB-UniRule"/>
</dbReference>
<dbReference type="GO" id="GO:0003677">
    <property type="term" value="F:DNA binding"/>
    <property type="evidence" value="ECO:0007669"/>
    <property type="project" value="UniProtKB-KW"/>
</dbReference>
<dbReference type="GO" id="GO:0004386">
    <property type="term" value="F:helicase activity"/>
    <property type="evidence" value="ECO:0007669"/>
    <property type="project" value="UniProtKB-UniRule"/>
</dbReference>
<dbReference type="GO" id="GO:0016817">
    <property type="term" value="F:hydrolase activity, acting on acid anhydrides"/>
    <property type="evidence" value="ECO:0007669"/>
    <property type="project" value="InterPro"/>
</dbReference>
<dbReference type="GO" id="GO:0006355">
    <property type="term" value="P:regulation of DNA-templated transcription"/>
    <property type="evidence" value="ECO:0007669"/>
    <property type="project" value="UniProtKB-UniRule"/>
</dbReference>
<dbReference type="CDD" id="cd18011">
    <property type="entry name" value="DEXDc_RapA"/>
    <property type="match status" value="1"/>
</dbReference>
<dbReference type="CDD" id="cd18793">
    <property type="entry name" value="SF2_C_SNF"/>
    <property type="match status" value="1"/>
</dbReference>
<dbReference type="Gene3D" id="2.30.30.140">
    <property type="match status" value="1"/>
</dbReference>
<dbReference type="Gene3D" id="2.30.30.930">
    <property type="match status" value="1"/>
</dbReference>
<dbReference type="Gene3D" id="3.30.360.80">
    <property type="match status" value="1"/>
</dbReference>
<dbReference type="Gene3D" id="6.10.140.1500">
    <property type="match status" value="1"/>
</dbReference>
<dbReference type="Gene3D" id="6.10.140.2230">
    <property type="match status" value="1"/>
</dbReference>
<dbReference type="Gene3D" id="3.40.50.300">
    <property type="entry name" value="P-loop containing nucleotide triphosphate hydrolases"/>
    <property type="match status" value="1"/>
</dbReference>
<dbReference type="Gene3D" id="3.40.50.10810">
    <property type="entry name" value="Tandem AAA-ATPase domain"/>
    <property type="match status" value="1"/>
</dbReference>
<dbReference type="HAMAP" id="MF_01821">
    <property type="entry name" value="Helicase_RapA"/>
    <property type="match status" value="1"/>
</dbReference>
<dbReference type="InterPro" id="IPR014001">
    <property type="entry name" value="Helicase_ATP-bd"/>
</dbReference>
<dbReference type="InterPro" id="IPR001650">
    <property type="entry name" value="Helicase_C-like"/>
</dbReference>
<dbReference type="InterPro" id="IPR023949">
    <property type="entry name" value="Helicase_RapA"/>
</dbReference>
<dbReference type="InterPro" id="IPR027417">
    <property type="entry name" value="P-loop_NTPase"/>
</dbReference>
<dbReference type="InterPro" id="IPR022737">
    <property type="entry name" value="RapA_C"/>
</dbReference>
<dbReference type="InterPro" id="IPR038718">
    <property type="entry name" value="SNF2-like_sf"/>
</dbReference>
<dbReference type="InterPro" id="IPR049730">
    <property type="entry name" value="SNF2/RAD54-like_C"/>
</dbReference>
<dbReference type="InterPro" id="IPR000330">
    <property type="entry name" value="SNF2_N"/>
</dbReference>
<dbReference type="InterPro" id="IPR040765">
    <property type="entry name" value="Tudor_1_RapA"/>
</dbReference>
<dbReference type="InterPro" id="IPR040766">
    <property type="entry name" value="Tudor_2_RapA"/>
</dbReference>
<dbReference type="NCBIfam" id="NF003426">
    <property type="entry name" value="PRK04914.1"/>
    <property type="match status" value="1"/>
</dbReference>
<dbReference type="PANTHER" id="PTHR45766">
    <property type="entry name" value="DNA ANNEALING HELICASE AND ENDONUCLEASE ZRANB3 FAMILY MEMBER"/>
    <property type="match status" value="1"/>
</dbReference>
<dbReference type="PANTHER" id="PTHR45766:SF6">
    <property type="entry name" value="SWI_SNF-RELATED MATRIX-ASSOCIATED ACTIN-DEPENDENT REGULATOR OF CHROMATIN SUBFAMILY A-LIKE PROTEIN 1"/>
    <property type="match status" value="1"/>
</dbReference>
<dbReference type="Pfam" id="PF00271">
    <property type="entry name" value="Helicase_C"/>
    <property type="match status" value="1"/>
</dbReference>
<dbReference type="Pfam" id="PF12137">
    <property type="entry name" value="RapA_C"/>
    <property type="match status" value="1"/>
</dbReference>
<dbReference type="Pfam" id="PF00176">
    <property type="entry name" value="SNF2-rel_dom"/>
    <property type="match status" value="1"/>
</dbReference>
<dbReference type="Pfam" id="PF18339">
    <property type="entry name" value="Tudor_1_RapA"/>
    <property type="match status" value="1"/>
</dbReference>
<dbReference type="Pfam" id="PF18337">
    <property type="entry name" value="Tudor_RapA"/>
    <property type="match status" value="1"/>
</dbReference>
<dbReference type="SMART" id="SM00487">
    <property type="entry name" value="DEXDc"/>
    <property type="match status" value="1"/>
</dbReference>
<dbReference type="SMART" id="SM00490">
    <property type="entry name" value="HELICc"/>
    <property type="match status" value="1"/>
</dbReference>
<dbReference type="SUPFAM" id="SSF52540">
    <property type="entry name" value="P-loop containing nucleoside triphosphate hydrolases"/>
    <property type="match status" value="2"/>
</dbReference>
<dbReference type="PROSITE" id="PS51192">
    <property type="entry name" value="HELICASE_ATP_BIND_1"/>
    <property type="match status" value="1"/>
</dbReference>
<dbReference type="PROSITE" id="PS51194">
    <property type="entry name" value="HELICASE_CTER"/>
    <property type="match status" value="1"/>
</dbReference>
<feature type="chain" id="PRO_1000088349" description="RNA polymerase-associated protein RapA">
    <location>
        <begin position="1"/>
        <end position="955"/>
    </location>
</feature>
<feature type="domain" description="Helicase ATP-binding" evidence="1">
    <location>
        <begin position="163"/>
        <end position="333"/>
    </location>
</feature>
<feature type="domain" description="Helicase C-terminal" evidence="1">
    <location>
        <begin position="478"/>
        <end position="642"/>
    </location>
</feature>
<feature type="short sequence motif" description="DEAH box">
    <location>
        <begin position="279"/>
        <end position="282"/>
    </location>
</feature>
<feature type="binding site" evidence="1">
    <location>
        <begin position="176"/>
        <end position="183"/>
    </location>
    <ligand>
        <name>ATP</name>
        <dbReference type="ChEBI" id="CHEBI:30616"/>
    </ligand>
</feature>
<comment type="function">
    <text evidence="1">Transcription regulator that activates transcription by stimulating RNA polymerase (RNAP) recycling in case of stress conditions such as supercoiled DNA or high salt concentrations. Probably acts by releasing the RNAP, when it is trapped or immobilized on tightly supercoiled DNA. Does not activate transcription on linear DNA. Probably not involved in DNA repair.</text>
</comment>
<comment type="subunit">
    <text evidence="1">Interacts with the RNAP. Has a higher affinity for the core RNAP than for the holoenzyme. Its ATPase activity is stimulated by binding to RNAP.</text>
</comment>
<comment type="similarity">
    <text evidence="1">Belongs to the SNF2/RAD54 helicase family. RapA subfamily.</text>
</comment>
<evidence type="ECO:0000255" key="1">
    <source>
        <dbReference type="HAMAP-Rule" id="MF_01821"/>
    </source>
</evidence>
<protein>
    <recommendedName>
        <fullName evidence="1">RNA polymerase-associated protein RapA</fullName>
        <ecNumber evidence="1">3.6.4.-</ecNumber>
    </recommendedName>
    <alternativeName>
        <fullName evidence="1">ATP-dependent helicase HepA</fullName>
    </alternativeName>
</protein>
<name>RAPA_AERS4</name>
<keyword id="KW-0010">Activator</keyword>
<keyword id="KW-0067">ATP-binding</keyword>
<keyword id="KW-0238">DNA-binding</keyword>
<keyword id="KW-0347">Helicase</keyword>
<keyword id="KW-0378">Hydrolase</keyword>
<keyword id="KW-0547">Nucleotide-binding</keyword>
<keyword id="KW-0804">Transcription</keyword>
<keyword id="KW-0805">Transcription regulation</keyword>
<sequence length="955" mass="107317">MPFALGQRWISDTETDLGLGTVVAVEGRMVTLLFPATGENRMYAKEEAPVTRVSFNVGDQIATHEDWTMTVEEVQEKNGLLIYVGVRTDNDEPVALKEVFLSNFIKFNKPQDRLFAGQIDRMSRFTLRYEALINQHKRRLNPTRGLAGGRVSLIPHQLYIAHEVGHRYAPRVLLADEVGLGKTIEAGMIIHQQLLSGRAHRVLILLPETLQHQWLVEMLRRFNLHFSLFDEERCIEAFADAENPFETEQLVICSLDFLRKKRRRFEQVLEAEWDLLVVDEAHHLEWSIDAPSRAYEMVEALAEQVPGVLLLTATPDQLGHQSHFARLRLLDPERFYDYEAFLAEEQAYGKVASAAQELLDGETLSDEARQILASQLEGLDMSDAAARQQAVAKLLDQHGTGRVLFRNSRANIQGFPERHLNVYPMPLPEQYKTAIKVMGMMGGNGGDLQTRALRYLYPEKIFQQFEGENATWTQFDPRVDWLLELLLSARQQKVLVICSEAATAIALEEALRTREGIRGTVFHEGMSILERDKASAYFAQEDGGAQVLLCSEIGSEGRNFQFASHLVLFDLPLNPDLLEQRIGRLDRIGQQNTVEIHVPYLEGTAQRALQLWYHDGLDAFEQTCPTARPVFEAVRDELFELLAANTGDQVTLDALLIKTRELHEPLKARLEQGRDRLLEIHSSGGAAAQLLVDKLAAEDDDTGMVSFALKMFDEIGVNQDDRGENALVLTPGDHMLVSSFPGLPQDGMTITFDRPTALSRDDMALLSWDHPMMRGGIDLILGSEIGATSVALLKNKALPIGSILLELIFVAESAAHPQLYRFMPPTPIRLLMDKNGQNLGEKVAFDAFNRQLTPVNRHLGSKLVTASQPVIHGLIGKGQVIAEELKAGIVDKARTRMAQTLQQDLDRLEALKAVNPNVRDSELDYLRNLQAELHHLIDQTQLKLDAIRFIVVTHN</sequence>
<gene>
    <name evidence="1" type="primary">rapA</name>
    <name type="ordered locus">ASA_3426</name>
</gene>
<accession>A4SR75</accession>
<reference key="1">
    <citation type="journal article" date="2008" name="BMC Genomics">
        <title>The genome of Aeromonas salmonicida subsp. salmonicida A449: insights into the evolution of a fish pathogen.</title>
        <authorList>
            <person name="Reith M.E."/>
            <person name="Singh R.K."/>
            <person name="Curtis B."/>
            <person name="Boyd J.M."/>
            <person name="Bouevitch A."/>
            <person name="Kimball J."/>
            <person name="Munholland J."/>
            <person name="Murphy C."/>
            <person name="Sarty D."/>
            <person name="Williams J."/>
            <person name="Nash J.H."/>
            <person name="Johnson S.C."/>
            <person name="Brown L.L."/>
        </authorList>
    </citation>
    <scope>NUCLEOTIDE SEQUENCE [LARGE SCALE GENOMIC DNA]</scope>
    <source>
        <strain>A449</strain>
    </source>
</reference>